<evidence type="ECO:0000255" key="1">
    <source>
        <dbReference type="HAMAP-Rule" id="MF_01151"/>
    </source>
</evidence>
<dbReference type="EMBL" id="Y17157">
    <property type="protein sequence ID" value="CAA76662.1"/>
    <property type="molecule type" value="Genomic_DNA"/>
</dbReference>
<dbReference type="SMR" id="O69267"/>
<dbReference type="STRING" id="1421.A2J09_11490"/>
<dbReference type="GO" id="GO:0005737">
    <property type="term" value="C:cytoplasm"/>
    <property type="evidence" value="ECO:0007669"/>
    <property type="project" value="UniProtKB-SubCell"/>
</dbReference>
<dbReference type="GO" id="GO:0000774">
    <property type="term" value="F:adenyl-nucleotide exchange factor activity"/>
    <property type="evidence" value="ECO:0007669"/>
    <property type="project" value="InterPro"/>
</dbReference>
<dbReference type="GO" id="GO:0042803">
    <property type="term" value="F:protein homodimerization activity"/>
    <property type="evidence" value="ECO:0007669"/>
    <property type="project" value="InterPro"/>
</dbReference>
<dbReference type="GO" id="GO:0051087">
    <property type="term" value="F:protein-folding chaperone binding"/>
    <property type="evidence" value="ECO:0007669"/>
    <property type="project" value="InterPro"/>
</dbReference>
<dbReference type="GO" id="GO:0051082">
    <property type="term" value="F:unfolded protein binding"/>
    <property type="evidence" value="ECO:0007669"/>
    <property type="project" value="TreeGrafter"/>
</dbReference>
<dbReference type="GO" id="GO:0006457">
    <property type="term" value="P:protein folding"/>
    <property type="evidence" value="ECO:0007669"/>
    <property type="project" value="InterPro"/>
</dbReference>
<dbReference type="CDD" id="cd00446">
    <property type="entry name" value="GrpE"/>
    <property type="match status" value="1"/>
</dbReference>
<dbReference type="FunFam" id="2.30.22.10:FF:000001">
    <property type="entry name" value="Protein GrpE"/>
    <property type="match status" value="1"/>
</dbReference>
<dbReference type="Gene3D" id="3.90.20.20">
    <property type="match status" value="1"/>
</dbReference>
<dbReference type="Gene3D" id="2.30.22.10">
    <property type="entry name" value="Head domain of nucleotide exchange factor GrpE"/>
    <property type="match status" value="1"/>
</dbReference>
<dbReference type="HAMAP" id="MF_01151">
    <property type="entry name" value="GrpE"/>
    <property type="match status" value="1"/>
</dbReference>
<dbReference type="InterPro" id="IPR000740">
    <property type="entry name" value="GrpE"/>
</dbReference>
<dbReference type="InterPro" id="IPR013805">
    <property type="entry name" value="GrpE_coiled_coil"/>
</dbReference>
<dbReference type="InterPro" id="IPR009012">
    <property type="entry name" value="GrpE_head"/>
</dbReference>
<dbReference type="NCBIfam" id="NF010738">
    <property type="entry name" value="PRK14140.1"/>
    <property type="match status" value="1"/>
</dbReference>
<dbReference type="PANTHER" id="PTHR21237">
    <property type="entry name" value="GRPE PROTEIN"/>
    <property type="match status" value="1"/>
</dbReference>
<dbReference type="PANTHER" id="PTHR21237:SF23">
    <property type="entry name" value="GRPE PROTEIN HOMOLOG, MITOCHONDRIAL"/>
    <property type="match status" value="1"/>
</dbReference>
<dbReference type="Pfam" id="PF01025">
    <property type="entry name" value="GrpE"/>
    <property type="match status" value="1"/>
</dbReference>
<dbReference type="PRINTS" id="PR00773">
    <property type="entry name" value="GRPEPROTEIN"/>
</dbReference>
<dbReference type="SUPFAM" id="SSF58014">
    <property type="entry name" value="Coiled-coil domain of nucleotide exchange factor GrpE"/>
    <property type="match status" value="1"/>
</dbReference>
<dbReference type="SUPFAM" id="SSF51064">
    <property type="entry name" value="Head domain of nucleotide exchange factor GrpE"/>
    <property type="match status" value="1"/>
</dbReference>
<dbReference type="PROSITE" id="PS01071">
    <property type="entry name" value="GRPE"/>
    <property type="match status" value="1"/>
</dbReference>
<gene>
    <name evidence="1" type="primary">grpE</name>
</gene>
<reference key="1">
    <citation type="submission" date="1998-09" db="EMBL/GenBank/DDBJ databases">
        <authorList>
            <person name="Ahmad S."/>
            <person name="Selvapandiyan A."/>
            <person name="Gasbarri M."/>
            <person name="Bhatnagar R.K."/>
        </authorList>
    </citation>
    <scope>NUCLEOTIDE SEQUENCE [GENOMIC DNA]</scope>
    <source>
        <strain>ATCC 33203 / 1593</strain>
    </source>
</reference>
<feature type="chain" id="PRO_0000113741" description="Protein GrpE">
    <location>
        <begin position="1"/>
        <end position="198"/>
    </location>
</feature>
<accession>O69267</accession>
<comment type="function">
    <text evidence="1">Participates actively in the response to hyperosmotic and heat shock by preventing the aggregation of stress-denatured proteins, in association with DnaK and GrpE. It is the nucleotide exchange factor for DnaK and may function as a thermosensor. Unfolded proteins bind initially to DnaJ; upon interaction with the DnaJ-bound protein, DnaK hydrolyzes its bound ATP, resulting in the formation of a stable complex. GrpE releases ADP from DnaK; ATP binding to DnaK triggers the release of the substrate protein, thus completing the reaction cycle. Several rounds of ATP-dependent interactions between DnaJ, DnaK and GrpE are required for fully efficient folding.</text>
</comment>
<comment type="subunit">
    <text evidence="1">Homodimer.</text>
</comment>
<comment type="subcellular location">
    <subcellularLocation>
        <location evidence="1">Cytoplasm</location>
    </subcellularLocation>
</comment>
<comment type="similarity">
    <text evidence="1">Belongs to the GrpE family.</text>
</comment>
<sequence>MIMRRIQVTETTENKDLVQGDVQAETATEEVERSEVQEEIELSVEEQYEANVAELQAKLDDDEENRHLRLRADFDNMRRRQQLDGEAAEKYRAQSLLSDLLPVLDNFERALQVETTSEETASIIKGIEMVYRSLLEATVFEGLQVIKAEGEQFDPNIHQAVMQEQDSEKETGVVLRELQKGYILKDRVLRPTMVSVNE</sequence>
<keyword id="KW-0143">Chaperone</keyword>
<keyword id="KW-0963">Cytoplasm</keyword>
<keyword id="KW-0346">Stress response</keyword>
<protein>
    <recommendedName>
        <fullName evidence="1">Protein GrpE</fullName>
    </recommendedName>
    <alternativeName>
        <fullName evidence="1">HSP-70 cofactor</fullName>
    </alternativeName>
</protein>
<proteinExistence type="inferred from homology"/>
<organism>
    <name type="scientific">Lysinibacillus sphaericus</name>
    <name type="common">Bacillus sphaericus</name>
    <dbReference type="NCBI Taxonomy" id="1421"/>
    <lineage>
        <taxon>Bacteria</taxon>
        <taxon>Bacillati</taxon>
        <taxon>Bacillota</taxon>
        <taxon>Bacilli</taxon>
        <taxon>Bacillales</taxon>
        <taxon>Bacillaceae</taxon>
        <taxon>Lysinibacillus</taxon>
    </lineage>
</organism>
<name>GRPE_LYSSH</name>